<reference key="1">
    <citation type="journal article" date="2007" name="Nat. Genet.">
        <title>Genomic analysis of Bartonella identifies type IV secretion systems as host adaptability factors.</title>
        <authorList>
            <person name="Saenz H.L."/>
            <person name="Engel P."/>
            <person name="Stoeckli M.C."/>
            <person name="Lanz C."/>
            <person name="Raddatz G."/>
            <person name="Vayssier-Taussat M."/>
            <person name="Birtles R."/>
            <person name="Schuster S.C."/>
            <person name="Dehio C."/>
        </authorList>
    </citation>
    <scope>NUCLEOTIDE SEQUENCE [LARGE SCALE GENOMIC DNA]</scope>
    <source>
        <strain>CIP 105476 / IBS 506</strain>
    </source>
</reference>
<evidence type="ECO:0000255" key="1">
    <source>
        <dbReference type="HAMAP-Rule" id="MF_00023"/>
    </source>
</evidence>
<sequence length="158" mass="18602">MNKKKNAPVRKIIADNRKARFNFEILNNLEAGLVLQGAEVKSLRSNHANIAESYASFENGELWLVNSYIPEYTQANRFNHEPRRLRKLLLSKREMARFFNATSREGMTLVPLKLYFNERGRVKLEIALARGKKLHDKRETEKKRDWGREKARLLKRYG</sequence>
<feature type="chain" id="PRO_1000074342" description="SsrA-binding protein">
    <location>
        <begin position="1"/>
        <end position="158"/>
    </location>
</feature>
<gene>
    <name evidence="1" type="primary">smpB</name>
    <name type="ordered locus">BT_0778</name>
</gene>
<name>SSRP_BART1</name>
<protein>
    <recommendedName>
        <fullName evidence="1">SsrA-binding protein</fullName>
    </recommendedName>
    <alternativeName>
        <fullName evidence="1">Small protein B</fullName>
    </alternativeName>
</protein>
<accession>A9IRK6</accession>
<keyword id="KW-0963">Cytoplasm</keyword>
<keyword id="KW-0694">RNA-binding</keyword>
<organism>
    <name type="scientific">Bartonella tribocorum (strain CIP 105476 / IBS 506)</name>
    <dbReference type="NCBI Taxonomy" id="382640"/>
    <lineage>
        <taxon>Bacteria</taxon>
        <taxon>Pseudomonadati</taxon>
        <taxon>Pseudomonadota</taxon>
        <taxon>Alphaproteobacteria</taxon>
        <taxon>Hyphomicrobiales</taxon>
        <taxon>Bartonellaceae</taxon>
        <taxon>Bartonella</taxon>
    </lineage>
</organism>
<comment type="function">
    <text evidence="1">Required for rescue of stalled ribosomes mediated by trans-translation. Binds to transfer-messenger RNA (tmRNA), required for stable association of tmRNA with ribosomes. tmRNA and SmpB together mimic tRNA shape, replacing the anticodon stem-loop with SmpB. tmRNA is encoded by the ssrA gene; the 2 termini fold to resemble tRNA(Ala) and it encodes a 'tag peptide', a short internal open reading frame. During trans-translation Ala-aminoacylated tmRNA acts like a tRNA, entering the A-site of stalled ribosomes, displacing the stalled mRNA. The ribosome then switches to translate the ORF on the tmRNA; the nascent peptide is terminated with the 'tag peptide' encoded by the tmRNA and targeted for degradation. The ribosome is freed to recommence translation, which seems to be the essential function of trans-translation.</text>
</comment>
<comment type="subcellular location">
    <subcellularLocation>
        <location evidence="1">Cytoplasm</location>
    </subcellularLocation>
    <text evidence="1">The tmRNA-SmpB complex associates with stalled 70S ribosomes.</text>
</comment>
<comment type="similarity">
    <text evidence="1">Belongs to the SmpB family.</text>
</comment>
<proteinExistence type="inferred from homology"/>
<dbReference type="EMBL" id="AM260525">
    <property type="protein sequence ID" value="CAK01193.1"/>
    <property type="molecule type" value="Genomic_DNA"/>
</dbReference>
<dbReference type="RefSeq" id="WP_012231306.1">
    <property type="nucleotide sequence ID" value="NC_010161.1"/>
</dbReference>
<dbReference type="SMR" id="A9IRK6"/>
<dbReference type="KEGG" id="btr:BT_0778"/>
<dbReference type="eggNOG" id="COG0691">
    <property type="taxonomic scope" value="Bacteria"/>
</dbReference>
<dbReference type="HOGENOM" id="CLU_108953_0_1_5"/>
<dbReference type="Proteomes" id="UP000001592">
    <property type="component" value="Chromosome"/>
</dbReference>
<dbReference type="GO" id="GO:0005829">
    <property type="term" value="C:cytosol"/>
    <property type="evidence" value="ECO:0007669"/>
    <property type="project" value="TreeGrafter"/>
</dbReference>
<dbReference type="GO" id="GO:0003723">
    <property type="term" value="F:RNA binding"/>
    <property type="evidence" value="ECO:0007669"/>
    <property type="project" value="UniProtKB-UniRule"/>
</dbReference>
<dbReference type="GO" id="GO:0070929">
    <property type="term" value="P:trans-translation"/>
    <property type="evidence" value="ECO:0007669"/>
    <property type="project" value="UniProtKB-UniRule"/>
</dbReference>
<dbReference type="CDD" id="cd09294">
    <property type="entry name" value="SmpB"/>
    <property type="match status" value="1"/>
</dbReference>
<dbReference type="Gene3D" id="2.40.280.10">
    <property type="match status" value="1"/>
</dbReference>
<dbReference type="HAMAP" id="MF_00023">
    <property type="entry name" value="SmpB"/>
    <property type="match status" value="1"/>
</dbReference>
<dbReference type="InterPro" id="IPR023620">
    <property type="entry name" value="SmpB"/>
</dbReference>
<dbReference type="InterPro" id="IPR000037">
    <property type="entry name" value="SsrA-bd_prot"/>
</dbReference>
<dbReference type="InterPro" id="IPR020081">
    <property type="entry name" value="SsrA-bd_prot_CS"/>
</dbReference>
<dbReference type="NCBIfam" id="NF003843">
    <property type="entry name" value="PRK05422.1"/>
    <property type="match status" value="1"/>
</dbReference>
<dbReference type="NCBIfam" id="TIGR00086">
    <property type="entry name" value="smpB"/>
    <property type="match status" value="1"/>
</dbReference>
<dbReference type="PANTHER" id="PTHR30308:SF2">
    <property type="entry name" value="SSRA-BINDING PROTEIN"/>
    <property type="match status" value="1"/>
</dbReference>
<dbReference type="PANTHER" id="PTHR30308">
    <property type="entry name" value="TMRNA-BINDING COMPONENT OF TRANS-TRANSLATION TAGGING COMPLEX"/>
    <property type="match status" value="1"/>
</dbReference>
<dbReference type="Pfam" id="PF01668">
    <property type="entry name" value="SmpB"/>
    <property type="match status" value="1"/>
</dbReference>
<dbReference type="SUPFAM" id="SSF74982">
    <property type="entry name" value="Small protein B (SmpB)"/>
    <property type="match status" value="1"/>
</dbReference>
<dbReference type="PROSITE" id="PS01317">
    <property type="entry name" value="SSRP"/>
    <property type="match status" value="1"/>
</dbReference>